<reference key="1">
    <citation type="journal article" date="2008" name="ISME J.">
        <title>Comparative genomics of two ecotypes of the marine planktonic copiotroph Alteromonas macleodii suggests alternative lifestyles associated with different kinds of particulate organic matter.</title>
        <authorList>
            <person name="Ivars-Martinez E."/>
            <person name="Martin-Cuadrado A.-B."/>
            <person name="D'Auria G."/>
            <person name="Mira A."/>
            <person name="Ferriera S."/>
            <person name="Johnson J."/>
            <person name="Friedman R."/>
            <person name="Rodriguez-Valera F."/>
        </authorList>
    </citation>
    <scope>NUCLEOTIDE SEQUENCE [LARGE SCALE GENOMIC DNA]</scope>
    <source>
        <strain>DSM 17117 / CIP 110805 / LMG 28347 / Deep ecotype</strain>
    </source>
</reference>
<keyword id="KW-0028">Amino-acid biosynthesis</keyword>
<keyword id="KW-0057">Aromatic amino acid biosynthesis</keyword>
<keyword id="KW-0067">ATP-binding</keyword>
<keyword id="KW-0963">Cytoplasm</keyword>
<keyword id="KW-0418">Kinase</keyword>
<keyword id="KW-0460">Magnesium</keyword>
<keyword id="KW-0479">Metal-binding</keyword>
<keyword id="KW-0547">Nucleotide-binding</keyword>
<keyword id="KW-0808">Transferase</keyword>
<comment type="function">
    <text evidence="1">Catalyzes the specific phosphorylation of the 3-hydroxyl group of shikimic acid using ATP as a cosubstrate.</text>
</comment>
<comment type="catalytic activity">
    <reaction evidence="1">
        <text>shikimate + ATP = 3-phosphoshikimate + ADP + H(+)</text>
        <dbReference type="Rhea" id="RHEA:13121"/>
        <dbReference type="ChEBI" id="CHEBI:15378"/>
        <dbReference type="ChEBI" id="CHEBI:30616"/>
        <dbReference type="ChEBI" id="CHEBI:36208"/>
        <dbReference type="ChEBI" id="CHEBI:145989"/>
        <dbReference type="ChEBI" id="CHEBI:456216"/>
        <dbReference type="EC" id="2.7.1.71"/>
    </reaction>
</comment>
<comment type="cofactor">
    <cofactor evidence="1">
        <name>Mg(2+)</name>
        <dbReference type="ChEBI" id="CHEBI:18420"/>
    </cofactor>
    <text evidence="1">Binds 1 Mg(2+) ion per subunit.</text>
</comment>
<comment type="pathway">
    <text evidence="1">Metabolic intermediate biosynthesis; chorismate biosynthesis; chorismate from D-erythrose 4-phosphate and phosphoenolpyruvate: step 5/7.</text>
</comment>
<comment type="subunit">
    <text evidence="1">Monomer.</text>
</comment>
<comment type="subcellular location">
    <subcellularLocation>
        <location evidence="1">Cytoplasm</location>
    </subcellularLocation>
</comment>
<comment type="similarity">
    <text evidence="1">Belongs to the shikimate kinase family.</text>
</comment>
<dbReference type="EC" id="2.7.1.71" evidence="1"/>
<dbReference type="EMBL" id="CP001103">
    <property type="protein sequence ID" value="AEA96662.1"/>
    <property type="molecule type" value="Genomic_DNA"/>
</dbReference>
<dbReference type="RefSeq" id="WP_012517017.1">
    <property type="nucleotide sequence ID" value="NC_011138.3"/>
</dbReference>
<dbReference type="SMR" id="B4S0F6"/>
<dbReference type="GeneID" id="56341000"/>
<dbReference type="KEGG" id="amc:MADE_1002565"/>
<dbReference type="HOGENOM" id="CLU_057607_2_2_6"/>
<dbReference type="UniPathway" id="UPA00053">
    <property type="reaction ID" value="UER00088"/>
</dbReference>
<dbReference type="Proteomes" id="UP000001870">
    <property type="component" value="Chromosome"/>
</dbReference>
<dbReference type="GO" id="GO:0005829">
    <property type="term" value="C:cytosol"/>
    <property type="evidence" value="ECO:0007669"/>
    <property type="project" value="TreeGrafter"/>
</dbReference>
<dbReference type="GO" id="GO:0005524">
    <property type="term" value="F:ATP binding"/>
    <property type="evidence" value="ECO:0007669"/>
    <property type="project" value="UniProtKB-UniRule"/>
</dbReference>
<dbReference type="GO" id="GO:0000287">
    <property type="term" value="F:magnesium ion binding"/>
    <property type="evidence" value="ECO:0007669"/>
    <property type="project" value="UniProtKB-UniRule"/>
</dbReference>
<dbReference type="GO" id="GO:0004765">
    <property type="term" value="F:shikimate kinase activity"/>
    <property type="evidence" value="ECO:0007669"/>
    <property type="project" value="UniProtKB-UniRule"/>
</dbReference>
<dbReference type="GO" id="GO:0008652">
    <property type="term" value="P:amino acid biosynthetic process"/>
    <property type="evidence" value="ECO:0007669"/>
    <property type="project" value="UniProtKB-KW"/>
</dbReference>
<dbReference type="GO" id="GO:0009073">
    <property type="term" value="P:aromatic amino acid family biosynthetic process"/>
    <property type="evidence" value="ECO:0007669"/>
    <property type="project" value="UniProtKB-KW"/>
</dbReference>
<dbReference type="GO" id="GO:0009423">
    <property type="term" value="P:chorismate biosynthetic process"/>
    <property type="evidence" value="ECO:0007669"/>
    <property type="project" value="UniProtKB-UniRule"/>
</dbReference>
<dbReference type="CDD" id="cd00464">
    <property type="entry name" value="SK"/>
    <property type="match status" value="1"/>
</dbReference>
<dbReference type="FunFam" id="3.40.50.300:FF:000099">
    <property type="entry name" value="Shikimate kinase 1"/>
    <property type="match status" value="1"/>
</dbReference>
<dbReference type="Gene3D" id="3.40.50.300">
    <property type="entry name" value="P-loop containing nucleotide triphosphate hydrolases"/>
    <property type="match status" value="1"/>
</dbReference>
<dbReference type="HAMAP" id="MF_00109">
    <property type="entry name" value="Shikimate_kinase"/>
    <property type="match status" value="1"/>
</dbReference>
<dbReference type="InterPro" id="IPR027417">
    <property type="entry name" value="P-loop_NTPase"/>
</dbReference>
<dbReference type="InterPro" id="IPR031322">
    <property type="entry name" value="Shikimate/glucono_kinase"/>
</dbReference>
<dbReference type="InterPro" id="IPR000623">
    <property type="entry name" value="Shikimate_kinase/TSH1"/>
</dbReference>
<dbReference type="InterPro" id="IPR023000">
    <property type="entry name" value="Shikimate_kinase_CS"/>
</dbReference>
<dbReference type="NCBIfam" id="NF003456">
    <property type="entry name" value="PRK05057.1"/>
    <property type="match status" value="1"/>
</dbReference>
<dbReference type="PANTHER" id="PTHR21087">
    <property type="entry name" value="SHIKIMATE KINASE"/>
    <property type="match status" value="1"/>
</dbReference>
<dbReference type="PANTHER" id="PTHR21087:SF16">
    <property type="entry name" value="SHIKIMATE KINASE 1, CHLOROPLASTIC"/>
    <property type="match status" value="1"/>
</dbReference>
<dbReference type="Pfam" id="PF01202">
    <property type="entry name" value="SKI"/>
    <property type="match status" value="1"/>
</dbReference>
<dbReference type="PRINTS" id="PR01100">
    <property type="entry name" value="SHIKIMTKNASE"/>
</dbReference>
<dbReference type="SUPFAM" id="SSF52540">
    <property type="entry name" value="P-loop containing nucleoside triphosphate hydrolases"/>
    <property type="match status" value="1"/>
</dbReference>
<dbReference type="PROSITE" id="PS01128">
    <property type="entry name" value="SHIKIMATE_KINASE"/>
    <property type="match status" value="1"/>
</dbReference>
<feature type="chain" id="PRO_1000094371" description="Shikimate kinase">
    <location>
        <begin position="1"/>
        <end position="171"/>
    </location>
</feature>
<feature type="binding site" evidence="1">
    <location>
        <begin position="14"/>
        <end position="19"/>
    </location>
    <ligand>
        <name>ATP</name>
        <dbReference type="ChEBI" id="CHEBI:30616"/>
    </ligand>
</feature>
<feature type="binding site" evidence="1">
    <location>
        <position position="18"/>
    </location>
    <ligand>
        <name>Mg(2+)</name>
        <dbReference type="ChEBI" id="CHEBI:18420"/>
    </ligand>
</feature>
<feature type="binding site" evidence="1">
    <location>
        <position position="36"/>
    </location>
    <ligand>
        <name>substrate</name>
    </ligand>
</feature>
<feature type="binding site" evidence="1">
    <location>
        <position position="60"/>
    </location>
    <ligand>
        <name>substrate</name>
    </ligand>
</feature>
<feature type="binding site" evidence="1">
    <location>
        <position position="82"/>
    </location>
    <ligand>
        <name>substrate</name>
    </ligand>
</feature>
<feature type="binding site" evidence="1">
    <location>
        <position position="120"/>
    </location>
    <ligand>
        <name>ATP</name>
        <dbReference type="ChEBI" id="CHEBI:30616"/>
    </ligand>
</feature>
<feature type="binding site" evidence="1">
    <location>
        <position position="139"/>
    </location>
    <ligand>
        <name>substrate</name>
    </ligand>
</feature>
<feature type="binding site" evidence="1">
    <location>
        <position position="156"/>
    </location>
    <ligand>
        <name>ATP</name>
        <dbReference type="ChEBI" id="CHEBI:30616"/>
    </ligand>
</feature>
<proteinExistence type="inferred from homology"/>
<protein>
    <recommendedName>
        <fullName evidence="1">Shikimate kinase</fullName>
        <shortName evidence="1">SK</shortName>
        <ecNumber evidence="1">2.7.1.71</ecNumber>
    </recommendedName>
</protein>
<gene>
    <name evidence="1" type="primary">aroK</name>
    <name type="ordered locus">MADE_1002565</name>
</gene>
<sequence length="171" mass="19181">MAEKRNIFLVGPMGAGKSTIGRHLADELHLDFFDSDQEIERRTGADIAWIFDLEGEDGFRAREENVINDLTDKQGIVLATGGGSIVTKAVRNRLSARGIVVYLQTTIDKQVARTQRDKRRPLLQNEDPEQVLRDLAEMRNPLYEEVADYIVDTDDQSARAVANQIISKIGL</sequence>
<evidence type="ECO:0000255" key="1">
    <source>
        <dbReference type="HAMAP-Rule" id="MF_00109"/>
    </source>
</evidence>
<name>AROK_ALTMD</name>
<accession>B4S0F6</accession>
<accession>F2G6J2</accession>
<organism>
    <name type="scientific">Alteromonas mediterranea (strain DSM 17117 / CIP 110805 / LMG 28347 / Deep ecotype)</name>
    <dbReference type="NCBI Taxonomy" id="1774373"/>
    <lineage>
        <taxon>Bacteria</taxon>
        <taxon>Pseudomonadati</taxon>
        <taxon>Pseudomonadota</taxon>
        <taxon>Gammaproteobacteria</taxon>
        <taxon>Alteromonadales</taxon>
        <taxon>Alteromonadaceae</taxon>
        <taxon>Alteromonas/Salinimonas group</taxon>
        <taxon>Alteromonas</taxon>
    </lineage>
</organism>